<accession>B3DNU3</accession>
<reference key="1">
    <citation type="journal article" date="2008" name="BMC Genomics">
        <title>Comparative genomic analysis of the gut bacterium Bifidobacterium longum reveals loci susceptible to deletion during pure culture growth.</title>
        <authorList>
            <person name="Lee J.H."/>
            <person name="Karamychev V.N."/>
            <person name="Kozyavkin S.A."/>
            <person name="Mills D."/>
            <person name="Pavlov A.R."/>
            <person name="Pavlova N.V."/>
            <person name="Polouchine N.N."/>
            <person name="Richardson P.M."/>
            <person name="Shakhova V.V."/>
            <person name="Slesarev A.I."/>
            <person name="Weimer B."/>
            <person name="O'Sullivan D.J."/>
        </authorList>
    </citation>
    <scope>NUCLEOTIDE SEQUENCE [LARGE SCALE GENOMIC DNA]</scope>
    <source>
        <strain>DJO10A</strain>
    </source>
</reference>
<proteinExistence type="inferred from homology"/>
<protein>
    <recommendedName>
        <fullName evidence="1">UPF0145 protein BLD_1357</fullName>
    </recommendedName>
</protein>
<name>Y1357_BIFLD</name>
<evidence type="ECO:0000255" key="1">
    <source>
        <dbReference type="HAMAP-Rule" id="MF_00338"/>
    </source>
</evidence>
<sequence>MILVTTTPSVDGYTITNYQGIVFGEVVSGVNMFKDLGAGLRNMFGGRSQGYEEELMRARNEAIAEMQQRAEAMGAHAVVGVDIDYEVLGADNGMLMVTASGTAVQIARTA</sequence>
<comment type="similarity">
    <text evidence="1">Belongs to the UPF0145 family.</text>
</comment>
<organism>
    <name type="scientific">Bifidobacterium longum (strain DJO10A)</name>
    <dbReference type="NCBI Taxonomy" id="205913"/>
    <lineage>
        <taxon>Bacteria</taxon>
        <taxon>Bacillati</taxon>
        <taxon>Actinomycetota</taxon>
        <taxon>Actinomycetes</taxon>
        <taxon>Bifidobacteriales</taxon>
        <taxon>Bifidobacteriaceae</taxon>
        <taxon>Bifidobacterium</taxon>
    </lineage>
</organism>
<gene>
    <name type="ordered locus">BLD_1357</name>
</gene>
<feature type="chain" id="PRO_1000119980" description="UPF0145 protein BLD_1357">
    <location>
        <begin position="1"/>
        <end position="110"/>
    </location>
</feature>
<dbReference type="EMBL" id="CP000605">
    <property type="protein sequence ID" value="ACD98802.1"/>
    <property type="molecule type" value="Genomic_DNA"/>
</dbReference>
<dbReference type="RefSeq" id="WP_007051681.1">
    <property type="nucleotide sequence ID" value="NC_010816.1"/>
</dbReference>
<dbReference type="SMR" id="B3DNU3"/>
<dbReference type="KEGG" id="blj:BLD_1357"/>
<dbReference type="HOGENOM" id="CLU_117144_3_1_11"/>
<dbReference type="Proteomes" id="UP000002419">
    <property type="component" value="Chromosome"/>
</dbReference>
<dbReference type="Gene3D" id="3.30.110.70">
    <property type="entry name" value="Hypothetical protein apc22750. Chain B"/>
    <property type="match status" value="1"/>
</dbReference>
<dbReference type="HAMAP" id="MF_00338">
    <property type="entry name" value="UPF0145"/>
    <property type="match status" value="1"/>
</dbReference>
<dbReference type="InterPro" id="IPR035439">
    <property type="entry name" value="UPF0145_dom_sf"/>
</dbReference>
<dbReference type="InterPro" id="IPR002765">
    <property type="entry name" value="UPF0145_YbjQ-like"/>
</dbReference>
<dbReference type="NCBIfam" id="NF002224">
    <property type="entry name" value="PRK01119.1"/>
    <property type="match status" value="1"/>
</dbReference>
<dbReference type="PANTHER" id="PTHR34068">
    <property type="entry name" value="UPF0145 PROTEIN YBJQ"/>
    <property type="match status" value="1"/>
</dbReference>
<dbReference type="PANTHER" id="PTHR34068:SF1">
    <property type="entry name" value="UPF0145 PROTEIN YBJQ"/>
    <property type="match status" value="1"/>
</dbReference>
<dbReference type="Pfam" id="PF01906">
    <property type="entry name" value="YbjQ_1"/>
    <property type="match status" value="1"/>
</dbReference>
<dbReference type="SUPFAM" id="SSF117782">
    <property type="entry name" value="YbjQ-like"/>
    <property type="match status" value="1"/>
</dbReference>